<name>MYG_ELEMA</name>
<evidence type="ECO:0000250" key="1">
    <source>
        <dbReference type="UniProtKB" id="P02144"/>
    </source>
</evidence>
<evidence type="ECO:0000250" key="2">
    <source>
        <dbReference type="UniProtKB" id="P02185"/>
    </source>
</evidence>
<evidence type="ECO:0000250" key="3">
    <source>
        <dbReference type="UniProtKB" id="P04247"/>
    </source>
</evidence>
<evidence type="ECO:0000250" key="4">
    <source>
        <dbReference type="UniProtKB" id="Q9QZ76"/>
    </source>
</evidence>
<evidence type="ECO:0000255" key="5">
    <source>
        <dbReference type="PROSITE-ProRule" id="PRU00238"/>
    </source>
</evidence>
<evidence type="ECO:0000269" key="6">
    <source>
    </source>
</evidence>
<evidence type="ECO:0000269" key="7">
    <source>
    </source>
</evidence>
<evidence type="ECO:0000305" key="8"/>
<evidence type="ECO:0007744" key="9">
    <source>
        <dbReference type="PDB" id="1EMY"/>
    </source>
</evidence>
<evidence type="ECO:0007829" key="10">
    <source>
        <dbReference type="PDB" id="1EMY"/>
    </source>
</evidence>
<comment type="function">
    <text evidence="1">Monomeric heme protein which primary function is to store oxygen and facilitate its diffusion within muscle tissues. Reversibly binds oxygen through a pentacoordinated heme iron and enables its timely and efficient release as needed during periods of heightened demand. Depending on the oxidative conditions of tissues and cells, and in addition to its ability to bind oxygen, it also has a nitrite reductase activity whereby it regulates the production of bioactive nitric oxide. Under stress conditions, like hypoxia and anoxia, it also protects cells against reactive oxygen species thanks to its pseudoperoxidase activity.</text>
</comment>
<comment type="catalytic activity">
    <reaction evidence="1">
        <text>Fe(III)-heme b-[protein] + nitric oxide + H2O = Fe(II)-heme b-[protein] + nitrite + 2 H(+)</text>
        <dbReference type="Rhea" id="RHEA:77711"/>
        <dbReference type="Rhea" id="RHEA-COMP:18975"/>
        <dbReference type="Rhea" id="RHEA-COMP:18976"/>
        <dbReference type="ChEBI" id="CHEBI:15377"/>
        <dbReference type="ChEBI" id="CHEBI:15378"/>
        <dbReference type="ChEBI" id="CHEBI:16301"/>
        <dbReference type="ChEBI" id="CHEBI:16480"/>
        <dbReference type="ChEBI" id="CHEBI:55376"/>
        <dbReference type="ChEBI" id="CHEBI:60344"/>
    </reaction>
    <physiologicalReaction direction="right-to-left" evidence="1">
        <dbReference type="Rhea" id="RHEA:77713"/>
    </physiologicalReaction>
</comment>
<comment type="catalytic activity">
    <reaction evidence="1">
        <text>H2O2 + AH2 = A + 2 H2O</text>
        <dbReference type="Rhea" id="RHEA:30275"/>
        <dbReference type="ChEBI" id="CHEBI:13193"/>
        <dbReference type="ChEBI" id="CHEBI:15377"/>
        <dbReference type="ChEBI" id="CHEBI:16240"/>
        <dbReference type="ChEBI" id="CHEBI:17499"/>
    </reaction>
</comment>
<comment type="subunit">
    <text evidence="2">Monomeric.</text>
</comment>
<comment type="subcellular location">
    <subcellularLocation>
        <location evidence="1">Cytoplasm</location>
        <location evidence="1">Sarcoplasm</location>
    </subcellularLocation>
</comment>
<comment type="similarity">
    <text evidence="5">Belongs to the globin family.</text>
</comment>
<keyword id="KW-0002">3D-structure</keyword>
<keyword id="KW-0963">Cytoplasm</keyword>
<keyword id="KW-0903">Direct protein sequencing</keyword>
<keyword id="KW-0349">Heme</keyword>
<keyword id="KW-0408">Iron</keyword>
<keyword id="KW-0479">Metal-binding</keyword>
<keyword id="KW-0514">Muscle protein</keyword>
<keyword id="KW-0560">Oxidoreductase</keyword>
<keyword id="KW-0561">Oxygen transport</keyword>
<keyword id="KW-0597">Phosphoprotein</keyword>
<keyword id="KW-0813">Transport</keyword>
<gene>
    <name type="primary">MB</name>
</gene>
<protein>
    <recommendedName>
        <fullName>Myoglobin</fullName>
    </recommendedName>
    <alternativeName>
        <fullName evidence="1">Nitrite reductase MB</fullName>
        <ecNumber evidence="1">1.7.-.-</ecNumber>
    </alternativeName>
    <alternativeName>
        <fullName evidence="1">Pseudoperoxidase MB</fullName>
        <ecNumber evidence="1">1.11.1.-</ecNumber>
    </alternativeName>
</protein>
<organism>
    <name type="scientific">Elephas maximus</name>
    <name type="common">Indian elephant</name>
    <dbReference type="NCBI Taxonomy" id="9783"/>
    <lineage>
        <taxon>Eukaryota</taxon>
        <taxon>Metazoa</taxon>
        <taxon>Chordata</taxon>
        <taxon>Craniata</taxon>
        <taxon>Vertebrata</taxon>
        <taxon>Euteleostomi</taxon>
        <taxon>Mammalia</taxon>
        <taxon>Eutheria</taxon>
        <taxon>Afrotheria</taxon>
        <taxon>Proboscidea</taxon>
        <taxon>Elephantidae</taxon>
        <taxon>Elephas</taxon>
    </lineage>
</organism>
<sequence length="154" mass="17127">MGLSDGEWELVLKTWGKVEADIPGHGETVFVRLFTGHPETLEKFDKFKHLKTEGEMKASEDLKKQGVTVLTALGGILKKKGHHEAEIQPLAQSHATKHKIPIKYLEFISDAIIHVLQSKHPAEFGADAQGAMKKALELFRNDIAAKYKELGFQG</sequence>
<reference key="1">
    <citation type="journal article" date="1980" name="Proc. R. Soc. Lond., B, Biol. Sci.">
        <title>The amino acid sequence of elephant (Elephas maximus) myoglobin and the phylogeny of Proboscidea.</title>
        <authorList>
            <person name="Dene H."/>
            <person name="Goodman M."/>
            <person name="Romero-Herrera A.E."/>
        </authorList>
    </citation>
    <scope>PROTEIN SEQUENCE OF 2-154</scope>
    <source>
        <tissue>Skeletal muscle</tissue>
    </source>
</reference>
<reference key="2">
    <citation type="journal article" date="1995" name="J. Biol. Chem.">
        <title>Crystal structure of Asian elephant (Elephas maximus) cyano-metmyoglobin at 1.78-A resolution. Phe29(B10) accounts for its unusual ligand binding properties.</title>
        <authorList>
            <person name="Bisig D.A."/>
            <person name="di Iorio E.E."/>
            <person name="Diederichs K."/>
            <person name="Winterhalter K.H."/>
            <person name="Piontek K."/>
        </authorList>
    </citation>
    <scope>X-RAY CRYSTALLOGRAPHY (1.78 ANGSTROMS) OF 2-154 IN COMPLEX WITH HEME</scope>
    <scope>SEQUENCE REVISION TO 28 AND 30</scope>
</reference>
<proteinExistence type="evidence at protein level"/>
<dbReference type="EC" id="1.7.-.-" evidence="1"/>
<dbReference type="EC" id="1.11.1.-" evidence="1"/>
<dbReference type="PIR" id="A94228">
    <property type="entry name" value="MYELI"/>
</dbReference>
<dbReference type="PDB" id="1EMY">
    <property type="method" value="X-ray"/>
    <property type="resolution" value="1.78 A"/>
    <property type="chains" value="A=2-154"/>
</dbReference>
<dbReference type="PDBsum" id="1EMY"/>
<dbReference type="SMR" id="P02186"/>
<dbReference type="EvolutionaryTrace" id="P02186"/>
<dbReference type="GO" id="GO:0070062">
    <property type="term" value="C:extracellular exosome"/>
    <property type="evidence" value="ECO:0007669"/>
    <property type="project" value="TreeGrafter"/>
</dbReference>
<dbReference type="GO" id="GO:0016528">
    <property type="term" value="C:sarcoplasm"/>
    <property type="evidence" value="ECO:0000250"/>
    <property type="project" value="UniProtKB"/>
</dbReference>
<dbReference type="GO" id="GO:0020037">
    <property type="term" value="F:heme binding"/>
    <property type="evidence" value="ECO:0007669"/>
    <property type="project" value="InterPro"/>
</dbReference>
<dbReference type="GO" id="GO:0046872">
    <property type="term" value="F:metal ion binding"/>
    <property type="evidence" value="ECO:0007669"/>
    <property type="project" value="UniProtKB-KW"/>
</dbReference>
<dbReference type="GO" id="GO:0098809">
    <property type="term" value="F:nitrite reductase activity"/>
    <property type="evidence" value="ECO:0000250"/>
    <property type="project" value="UniProtKB"/>
</dbReference>
<dbReference type="GO" id="GO:0019825">
    <property type="term" value="F:oxygen binding"/>
    <property type="evidence" value="ECO:0007669"/>
    <property type="project" value="InterPro"/>
</dbReference>
<dbReference type="GO" id="GO:0005344">
    <property type="term" value="F:oxygen carrier activity"/>
    <property type="evidence" value="ECO:0000250"/>
    <property type="project" value="UniProtKB"/>
</dbReference>
<dbReference type="GO" id="GO:0004601">
    <property type="term" value="F:peroxidase activity"/>
    <property type="evidence" value="ECO:0000250"/>
    <property type="project" value="UniProtKB"/>
</dbReference>
<dbReference type="GO" id="GO:0019430">
    <property type="term" value="P:removal of superoxide radicals"/>
    <property type="evidence" value="ECO:0000250"/>
    <property type="project" value="UniProtKB"/>
</dbReference>
<dbReference type="Gene3D" id="6.10.140.2100">
    <property type="match status" value="1"/>
</dbReference>
<dbReference type="Gene3D" id="6.10.140.2110">
    <property type="match status" value="1"/>
</dbReference>
<dbReference type="InterPro" id="IPR000971">
    <property type="entry name" value="Globin"/>
</dbReference>
<dbReference type="InterPro" id="IPR009050">
    <property type="entry name" value="Globin-like_sf"/>
</dbReference>
<dbReference type="InterPro" id="IPR002335">
    <property type="entry name" value="Myoglobin"/>
</dbReference>
<dbReference type="PANTHER" id="PTHR47132">
    <property type="entry name" value="MYOGLOBIN"/>
    <property type="match status" value="1"/>
</dbReference>
<dbReference type="PANTHER" id="PTHR47132:SF1">
    <property type="entry name" value="MYOGLOBIN"/>
    <property type="match status" value="1"/>
</dbReference>
<dbReference type="Pfam" id="PF00042">
    <property type="entry name" value="Globin"/>
    <property type="match status" value="1"/>
</dbReference>
<dbReference type="PRINTS" id="PR00613">
    <property type="entry name" value="MYOGLOBIN"/>
</dbReference>
<dbReference type="SUPFAM" id="SSF46458">
    <property type="entry name" value="Globin-like"/>
    <property type="match status" value="1"/>
</dbReference>
<dbReference type="PROSITE" id="PS01033">
    <property type="entry name" value="GLOBIN"/>
    <property type="match status" value="1"/>
</dbReference>
<feature type="initiator methionine" description="Removed" evidence="6">
    <location>
        <position position="1"/>
    </location>
</feature>
<feature type="chain" id="PRO_0000053290" description="Myoglobin">
    <location>
        <begin position="2"/>
        <end position="154"/>
    </location>
</feature>
<feature type="domain" description="Globin" evidence="5">
    <location>
        <begin position="2"/>
        <end position="148"/>
    </location>
</feature>
<feature type="binding site" description="proximal binding residue" evidence="7 9">
    <location>
        <position position="94"/>
    </location>
    <ligand>
        <name>heme b</name>
        <dbReference type="ChEBI" id="CHEBI:60344"/>
    </ligand>
    <ligandPart>
        <name>Fe</name>
        <dbReference type="ChEBI" id="CHEBI:18248"/>
    </ligandPart>
</feature>
<feature type="modified residue" description="Phosphoserine" evidence="4">
    <location>
        <position position="4"/>
    </location>
</feature>
<feature type="modified residue" description="Phosphothreonine" evidence="3">
    <location>
        <position position="68"/>
    </location>
</feature>
<feature type="sequence conflict" description="In Ref. 1; AA sequence." evidence="8" ref="1">
    <original>T</original>
    <variation>F</variation>
    <location>
        <position position="28"/>
    </location>
</feature>
<feature type="sequence conflict" description="In Ref. 1; AA sequence." evidence="8" ref="1">
    <original>F</original>
    <variation>L</variation>
    <location>
        <position position="30"/>
    </location>
</feature>
<feature type="helix" evidence="10">
    <location>
        <begin position="5"/>
        <end position="19"/>
    </location>
</feature>
<feature type="helix" evidence="10">
    <location>
        <begin position="22"/>
        <end position="36"/>
    </location>
</feature>
<feature type="helix" evidence="10">
    <location>
        <begin position="38"/>
        <end position="43"/>
    </location>
</feature>
<feature type="turn" evidence="10">
    <location>
        <begin position="45"/>
        <end position="49"/>
    </location>
</feature>
<feature type="helix" evidence="10">
    <location>
        <begin position="53"/>
        <end position="57"/>
    </location>
</feature>
<feature type="helix" evidence="10">
    <location>
        <begin position="60"/>
        <end position="78"/>
    </location>
</feature>
<feature type="turn" evidence="10">
    <location>
        <begin position="79"/>
        <end position="81"/>
    </location>
</feature>
<feature type="helix" evidence="10">
    <location>
        <begin position="84"/>
        <end position="96"/>
    </location>
</feature>
<feature type="helix" evidence="10">
    <location>
        <begin position="102"/>
        <end position="119"/>
    </location>
</feature>
<feature type="turn" evidence="10">
    <location>
        <begin position="121"/>
        <end position="123"/>
    </location>
</feature>
<feature type="helix" evidence="10">
    <location>
        <begin position="126"/>
        <end position="149"/>
    </location>
</feature>
<accession>P02186</accession>